<gene>
    <name type="primary">Myog</name>
</gene>
<keyword id="KW-0010">Activator</keyword>
<keyword id="KW-0131">Cell cycle</keyword>
<keyword id="KW-0217">Developmental protein</keyword>
<keyword id="KW-0221">Differentiation</keyword>
<keyword id="KW-0238">DNA-binding</keyword>
<keyword id="KW-0517">Myogenesis</keyword>
<keyword id="KW-0539">Nucleus</keyword>
<keyword id="KW-0597">Phosphoprotein</keyword>
<keyword id="KW-1185">Reference proteome</keyword>
<keyword id="KW-0804">Transcription</keyword>
<keyword id="KW-0805">Transcription regulation</keyword>
<organism>
    <name type="scientific">Rattus norvegicus</name>
    <name type="common">Rat</name>
    <dbReference type="NCBI Taxonomy" id="10116"/>
    <lineage>
        <taxon>Eukaryota</taxon>
        <taxon>Metazoa</taxon>
        <taxon>Chordata</taxon>
        <taxon>Craniata</taxon>
        <taxon>Vertebrata</taxon>
        <taxon>Euteleostomi</taxon>
        <taxon>Mammalia</taxon>
        <taxon>Eutheria</taxon>
        <taxon>Euarchontoglires</taxon>
        <taxon>Glires</taxon>
        <taxon>Rodentia</taxon>
        <taxon>Myomorpha</taxon>
        <taxon>Muroidea</taxon>
        <taxon>Muridae</taxon>
        <taxon>Murinae</taxon>
        <taxon>Rattus</taxon>
    </lineage>
</organism>
<feature type="chain" id="PRO_0000127378" description="Myogenin">
    <location>
        <begin position="1"/>
        <end position="287"/>
    </location>
</feature>
<feature type="domain" description="bHLH" evidence="2">
    <location>
        <begin position="81"/>
        <end position="132"/>
    </location>
</feature>
<feature type="modified residue" description="Phosphoserine; by CaMK2G" evidence="3">
    <location>
        <position position="77"/>
    </location>
</feature>
<feature type="modified residue" description="Phosphoserine; by CaMK2G" evidence="3">
    <location>
        <position position="79"/>
    </location>
</feature>
<feature type="modified residue" description="Phosphothreonine; by CaMK2G" evidence="3">
    <location>
        <position position="87"/>
    </location>
</feature>
<feature type="mutagenesis site" description="Reduces phosphorylation." evidence="3">
    <original>S</original>
    <variation>A</variation>
    <location>
        <position position="77"/>
    </location>
</feature>
<feature type="mutagenesis site" description="Reduces phosphorylation." evidence="3">
    <original>S</original>
    <variation>A</variation>
    <location>
        <position position="79"/>
    </location>
</feature>
<feature type="mutagenesis site" description="Reduces phosphorylation and inhibits DNA-binding and transcriptional activation." evidence="3">
    <original>T</original>
    <variation>A</variation>
    <location>
        <position position="87"/>
    </location>
</feature>
<reference key="1">
    <citation type="journal article" date="1989" name="Cell">
        <title>Myogenin, a factor regulating myogenesis, has a domain homologous to MyoD.</title>
        <authorList>
            <person name="Wright W.E."/>
            <person name="Sassoon D.A."/>
            <person name="Lin V.K."/>
        </authorList>
    </citation>
    <scope>NUCLEOTIDE SEQUENCE [MRNA]</scope>
</reference>
<reference key="2">
    <citation type="journal article" date="1991" name="Proc. Natl. Acad. Sci. U.S.A.">
        <title>Myogenin and MyoD join a family of skeletal muscle genes regulated by electrical activity.</title>
        <authorList>
            <person name="Eftimie R."/>
            <person name="Brenner H.R."/>
            <person name="Buonanno A."/>
        </authorList>
    </citation>
    <scope>INDUCTION</scope>
</reference>
<reference key="3">
    <citation type="journal article" date="1997" name="Mol. Cell. Biol.">
        <title>Muscle LIM protein promotes myogenesis by enhancing the activity of MyoD.</title>
        <authorList>
            <person name="Kong Y."/>
            <person name="Flick M.J."/>
            <person name="Kudla A.J."/>
            <person name="Konieczny S.F."/>
        </authorList>
    </citation>
    <scope>INTERACTION WITH CSRP3</scope>
</reference>
<reference key="4">
    <citation type="journal article" date="2004" name="Cell. Signal.">
        <title>CaM kinase II-dependent phosphorylation of myogenin contributes to activity-dependent suppression of nAChR gene expression in developing rat myotubes.</title>
        <authorList>
            <person name="Tang H."/>
            <person name="Macpherson P."/>
            <person name="Argetsinger L.S."/>
            <person name="Cieslak D."/>
            <person name="Suhr S.T."/>
            <person name="Carter-Su C."/>
            <person name="Goldman D."/>
        </authorList>
    </citation>
    <scope>FUNCTION</scope>
    <scope>PHOSPHORYLATION AT SER-77; SER-79 AND THR-87</scope>
    <scope>DNA-BINDING</scope>
    <scope>MUTAGENESIS OF SER-77; SER-79 AND THR-87</scope>
</reference>
<sequence length="287" mass="32503">MELYETSPYFYQEPHFYDGENYLPVHLQGFEPPGYERTELSLSPEARGPLEEKGLGTPEHCPGQCLPWACKVCKRKSVSVDRRRAATLREKRRLKKVNEAFEALKRSTLLNPNQRLPKVEILRSAIQYIERLQALLSSLNQEERDLRYRGGGGPSRWYPVNATPTAPPAVRSGAMHWSLVPTQEIICSQLTLQVPTTCTPLRPSWTASRWRICLSPSQMKPCPTEIVCQAGCAWEPLSWCQTPPLLQQGPFKWGCPGAQKTALGCHKPDYPPSIHIRLTPSPAREFN</sequence>
<accession>P20428</accession>
<proteinExistence type="evidence at protein level"/>
<comment type="function">
    <text evidence="3">Acts as a transcriptional activator that promotes transcription of muscle-specific target genes and plays a role in muscle differentiation, cell cycle exit and muscle atrophy. Essential for the development of functional embryonic skeletal fiber muscle differentiation. However is dispensable for postnatal skeletal muscle growth; phosphorylation by CAMK2G inhibits its transcriptional activity in respons to muscle activity. Required for the recruitment of the FACT complex to muscle-specific promoter regions, thus promoting gene expression initiation. During terminal myoblast differentiation, plays a role as a strong activator of transcription at loci with an open chromatin structure previously initiated by MYOD1. Together with MYF5 and MYOD1, co-occupies muscle-specific gene promoter core regions during myogenesis. Also cooperates with myocyte-specific enhancer factor MEF2D and BRG1-dependent recruitment of SWI/SNF chromatin-remodeling enzymes to alter chromatin structure at myogenic late gene promoters. Facilitates cell cycle exit during terminal muscle differentiation through the up-regulation of miR-20a expression, which in turn represses genes involved in cell cycle progression. Binds to the E-box containing (E1) promoter region of the miR-20a gene. Also plays a role in preventing reversal of muscle cell differentiation. Contributes to the atrophy-related gene expression in adult denervated muscles. Induces fibroblasts to differentiate into myoblasts.</text>
</comment>
<comment type="subunit">
    <text evidence="1 5">Homodimer and heterodimer with E12; heterodimerization enhances MYOG DNA-binding and transcriptional activities. Interacts with SMARCA4/BRG1/BAF190A. Interacts (via C-terminal region) with SSRP1 and SUPT16H; the interaction is indicative of an interaction with the FACT complex (By similarity). Interacts with CSRP3.</text>
</comment>
<comment type="subcellular location">
    <subcellularLocation>
        <location>Nucleus</location>
    </subcellularLocation>
    <text evidence="1">Recruited to late myogenic gene promoter regulatory sequences with SMARCA4/BRG1/BAF190A and SWI/SNF chromatin-remodeling enzymes to promote chromatin-remodeling and transcription initiation in developing embryos.</text>
</comment>
<comment type="tissue specificity">
    <text>Expressed in muscle (at protein level).</text>
</comment>
<comment type="induction">
    <text evidence="4">Up-regulated in denerved muscles cells. Down-regulated in soleus muscle in an electrical activity-dependent manner.</text>
</comment>
<comment type="PTM">
    <text evidence="3">Phosphorylated by CAMK2G on threonine and serine amino acids in a muscle activity-dependent manner. Phosphorylation of Thr-87 impairs both DNA-binding and trans-activation functions in contracting muscles.</text>
</comment>
<name>MYOG_RAT</name>
<evidence type="ECO:0000250" key="1"/>
<evidence type="ECO:0000255" key="2">
    <source>
        <dbReference type="PROSITE-ProRule" id="PRU00981"/>
    </source>
</evidence>
<evidence type="ECO:0000269" key="3">
    <source>
    </source>
</evidence>
<evidence type="ECO:0000269" key="4">
    <source>
    </source>
</evidence>
<evidence type="ECO:0000269" key="5">
    <source>
    </source>
</evidence>
<protein>
    <recommendedName>
        <fullName>Myogenin</fullName>
    </recommendedName>
</protein>
<dbReference type="EMBL" id="M24393">
    <property type="protein sequence ID" value="AAA41662.1"/>
    <property type="molecule type" value="mRNA"/>
</dbReference>
<dbReference type="PIR" id="A31876">
    <property type="entry name" value="A31876"/>
</dbReference>
<dbReference type="RefSeq" id="NP_058811.2">
    <property type="nucleotide sequence ID" value="NM_017115.2"/>
</dbReference>
<dbReference type="SMR" id="P20428"/>
<dbReference type="DIP" id="DIP-52N"/>
<dbReference type="FunCoup" id="P20428">
    <property type="interactions" value="26"/>
</dbReference>
<dbReference type="STRING" id="10116.ENSRNOP00000073308"/>
<dbReference type="iPTMnet" id="P20428"/>
<dbReference type="PhosphoSitePlus" id="P20428"/>
<dbReference type="PaxDb" id="10116-ENSRNOP00000039817"/>
<dbReference type="GeneID" id="29148"/>
<dbReference type="KEGG" id="rno:29148"/>
<dbReference type="UCSC" id="RGD:620432">
    <property type="organism name" value="rat"/>
</dbReference>
<dbReference type="AGR" id="RGD:620432"/>
<dbReference type="CTD" id="4656"/>
<dbReference type="RGD" id="620432">
    <property type="gene designation" value="Myog"/>
</dbReference>
<dbReference type="eggNOG" id="KOG3960">
    <property type="taxonomic scope" value="Eukaryota"/>
</dbReference>
<dbReference type="HOGENOM" id="CLU_969646_0_0_1"/>
<dbReference type="InParanoid" id="P20428"/>
<dbReference type="OrthoDB" id="10049614at2759"/>
<dbReference type="PhylomeDB" id="P20428"/>
<dbReference type="TreeFam" id="TF316344"/>
<dbReference type="Reactome" id="R-RNO-525793">
    <property type="pathway name" value="Myogenesis"/>
</dbReference>
<dbReference type="PRO" id="PR:P20428"/>
<dbReference type="Proteomes" id="UP000002494">
    <property type="component" value="Chromosome 13"/>
</dbReference>
<dbReference type="Bgee" id="ENSRNOG00000030743">
    <property type="expression patterns" value="Expressed in quadriceps femoris and 3 other cell types or tissues"/>
</dbReference>
<dbReference type="ExpressionAtlas" id="P20428">
    <property type="expression patterns" value="baseline and differential"/>
</dbReference>
<dbReference type="GO" id="GO:0005634">
    <property type="term" value="C:nucleus"/>
    <property type="evidence" value="ECO:0000314"/>
    <property type="project" value="UniProtKB"/>
</dbReference>
<dbReference type="GO" id="GO:0032993">
    <property type="term" value="C:protein-DNA complex"/>
    <property type="evidence" value="ECO:0000314"/>
    <property type="project" value="UniProtKB"/>
</dbReference>
<dbReference type="GO" id="GO:0031490">
    <property type="term" value="F:chromatin DNA binding"/>
    <property type="evidence" value="ECO:0000266"/>
    <property type="project" value="RGD"/>
</dbReference>
<dbReference type="GO" id="GO:0000987">
    <property type="term" value="F:cis-regulatory region sequence-specific DNA binding"/>
    <property type="evidence" value="ECO:0000266"/>
    <property type="project" value="RGD"/>
</dbReference>
<dbReference type="GO" id="GO:0001216">
    <property type="term" value="F:DNA-binding transcription activator activity"/>
    <property type="evidence" value="ECO:0000250"/>
    <property type="project" value="UniProtKB"/>
</dbReference>
<dbReference type="GO" id="GO:0001228">
    <property type="term" value="F:DNA-binding transcription activator activity, RNA polymerase II-specific"/>
    <property type="evidence" value="ECO:0000266"/>
    <property type="project" value="RGD"/>
</dbReference>
<dbReference type="GO" id="GO:0003700">
    <property type="term" value="F:DNA-binding transcription factor activity"/>
    <property type="evidence" value="ECO:0000250"/>
    <property type="project" value="UniProtKB"/>
</dbReference>
<dbReference type="GO" id="GO:0000981">
    <property type="term" value="F:DNA-binding transcription factor activity, RNA polymerase II-specific"/>
    <property type="evidence" value="ECO:0000318"/>
    <property type="project" value="GO_Central"/>
</dbReference>
<dbReference type="GO" id="GO:0070888">
    <property type="term" value="F:E-box binding"/>
    <property type="evidence" value="ECO:0000250"/>
    <property type="project" value="UniProtKB"/>
</dbReference>
<dbReference type="GO" id="GO:0046983">
    <property type="term" value="F:protein dimerization activity"/>
    <property type="evidence" value="ECO:0007669"/>
    <property type="project" value="InterPro"/>
</dbReference>
<dbReference type="GO" id="GO:0000978">
    <property type="term" value="F:RNA polymerase II cis-regulatory region sequence-specific DNA binding"/>
    <property type="evidence" value="ECO:0000314"/>
    <property type="project" value="RGD"/>
</dbReference>
<dbReference type="GO" id="GO:0000977">
    <property type="term" value="F:RNA polymerase II transcription regulatory region sequence-specific DNA binding"/>
    <property type="evidence" value="ECO:0000266"/>
    <property type="project" value="RGD"/>
</dbReference>
<dbReference type="GO" id="GO:0043565">
    <property type="term" value="F:sequence-specific DNA binding"/>
    <property type="evidence" value="ECO:0000266"/>
    <property type="project" value="RGD"/>
</dbReference>
<dbReference type="GO" id="GO:1990837">
    <property type="term" value="F:sequence-specific double-stranded DNA binding"/>
    <property type="evidence" value="ECO:0000266"/>
    <property type="project" value="RGD"/>
</dbReference>
<dbReference type="GO" id="GO:0071392">
    <property type="term" value="P:cellular response to estradiol stimulus"/>
    <property type="evidence" value="ECO:0000250"/>
    <property type="project" value="UniProtKB"/>
</dbReference>
<dbReference type="GO" id="GO:0071363">
    <property type="term" value="P:cellular response to growth factor stimulus"/>
    <property type="evidence" value="ECO:0000266"/>
    <property type="project" value="RGD"/>
</dbReference>
<dbReference type="GO" id="GO:0071285">
    <property type="term" value="P:cellular response to lithium ion"/>
    <property type="evidence" value="ECO:0000266"/>
    <property type="project" value="RGD"/>
</dbReference>
<dbReference type="GO" id="GO:0071259">
    <property type="term" value="P:cellular response to magnetism"/>
    <property type="evidence" value="ECO:0000270"/>
    <property type="project" value="RGD"/>
</dbReference>
<dbReference type="GO" id="GO:0071300">
    <property type="term" value="P:cellular response to retinoic acid"/>
    <property type="evidence" value="ECO:0000270"/>
    <property type="project" value="RGD"/>
</dbReference>
<dbReference type="GO" id="GO:0071356">
    <property type="term" value="P:cellular response to tumor necrosis factor"/>
    <property type="evidence" value="ECO:0000266"/>
    <property type="project" value="RGD"/>
</dbReference>
<dbReference type="GO" id="GO:0042692">
    <property type="term" value="P:muscle cell differentiation"/>
    <property type="evidence" value="ECO:0000266"/>
    <property type="project" value="RGD"/>
</dbReference>
<dbReference type="GO" id="GO:0007517">
    <property type="term" value="P:muscle organ development"/>
    <property type="evidence" value="ECO:0000266"/>
    <property type="project" value="RGD"/>
</dbReference>
<dbReference type="GO" id="GO:0045445">
    <property type="term" value="P:myoblast differentiation"/>
    <property type="evidence" value="ECO:0000270"/>
    <property type="project" value="RGD"/>
</dbReference>
<dbReference type="GO" id="GO:0014902">
    <property type="term" value="P:myotube differentiation"/>
    <property type="evidence" value="ECO:0000315"/>
    <property type="project" value="RGD"/>
</dbReference>
<dbReference type="GO" id="GO:0008285">
    <property type="term" value="P:negative regulation of cell population proliferation"/>
    <property type="evidence" value="ECO:0000250"/>
    <property type="project" value="UniProtKB"/>
</dbReference>
<dbReference type="GO" id="GO:0045820">
    <property type="term" value="P:negative regulation of glycolytic process"/>
    <property type="evidence" value="ECO:0000314"/>
    <property type="project" value="RGD"/>
</dbReference>
<dbReference type="GO" id="GO:0001503">
    <property type="term" value="P:ossification"/>
    <property type="evidence" value="ECO:0000266"/>
    <property type="project" value="RGD"/>
</dbReference>
<dbReference type="GO" id="GO:0045893">
    <property type="term" value="P:positive regulation of DNA-templated transcription"/>
    <property type="evidence" value="ECO:0000266"/>
    <property type="project" value="RGD"/>
</dbReference>
<dbReference type="GO" id="GO:0014737">
    <property type="term" value="P:positive regulation of muscle atrophy"/>
    <property type="evidence" value="ECO:0000250"/>
    <property type="project" value="UniProtKB"/>
</dbReference>
<dbReference type="GO" id="GO:0045663">
    <property type="term" value="P:positive regulation of myoblast differentiation"/>
    <property type="evidence" value="ECO:0000250"/>
    <property type="project" value="UniProtKB"/>
</dbReference>
<dbReference type="GO" id="GO:0010831">
    <property type="term" value="P:positive regulation of myotube differentiation"/>
    <property type="evidence" value="ECO:0000250"/>
    <property type="project" value="UniProtKB"/>
</dbReference>
<dbReference type="GO" id="GO:1903862">
    <property type="term" value="P:positive regulation of oxidative phosphorylation"/>
    <property type="evidence" value="ECO:0000314"/>
    <property type="project" value="RGD"/>
</dbReference>
<dbReference type="GO" id="GO:0048743">
    <property type="term" value="P:positive regulation of skeletal muscle fiber development"/>
    <property type="evidence" value="ECO:0000250"/>
    <property type="project" value="UniProtKB"/>
</dbReference>
<dbReference type="GO" id="GO:0045944">
    <property type="term" value="P:positive regulation of transcription by RNA polymerase II"/>
    <property type="evidence" value="ECO:0000314"/>
    <property type="project" value="UniProtKB"/>
</dbReference>
<dbReference type="GO" id="GO:0051726">
    <property type="term" value="P:regulation of cell cycle"/>
    <property type="evidence" value="ECO:0000250"/>
    <property type="project" value="UniProtKB"/>
</dbReference>
<dbReference type="GO" id="GO:1901739">
    <property type="term" value="P:regulation of myoblast fusion"/>
    <property type="evidence" value="ECO:0000250"/>
    <property type="project" value="UniProtKB"/>
</dbReference>
<dbReference type="GO" id="GO:0014842">
    <property type="term" value="P:regulation of skeletal muscle satellite cell proliferation"/>
    <property type="evidence" value="ECO:0000250"/>
    <property type="project" value="UniProtKB"/>
</dbReference>
<dbReference type="GO" id="GO:0014894">
    <property type="term" value="P:response to denervation involved in regulation of muscle adaptation"/>
    <property type="evidence" value="ECO:0000250"/>
    <property type="project" value="UniProtKB"/>
</dbReference>
<dbReference type="GO" id="GO:0014878">
    <property type="term" value="P:response to electrical stimulus involved in regulation of muscle adaptation"/>
    <property type="evidence" value="ECO:0000314"/>
    <property type="project" value="UniProtKB"/>
</dbReference>
<dbReference type="GO" id="GO:0009629">
    <property type="term" value="P:response to gravity"/>
    <property type="evidence" value="ECO:0000270"/>
    <property type="project" value="RGD"/>
</dbReference>
<dbReference type="GO" id="GO:0014850">
    <property type="term" value="P:response to muscle activity"/>
    <property type="evidence" value="ECO:0000270"/>
    <property type="project" value="RGD"/>
</dbReference>
<dbReference type="GO" id="GO:0014873">
    <property type="term" value="P:response to muscle activity involved in regulation of muscle adaptation"/>
    <property type="evidence" value="ECO:0000314"/>
    <property type="project" value="UniProtKB"/>
</dbReference>
<dbReference type="GO" id="GO:0014732">
    <property type="term" value="P:skeletal muscle atrophy"/>
    <property type="evidence" value="ECO:0000270"/>
    <property type="project" value="RGD"/>
</dbReference>
<dbReference type="GO" id="GO:0035914">
    <property type="term" value="P:skeletal muscle cell differentiation"/>
    <property type="evidence" value="ECO:0000318"/>
    <property type="project" value="GO_Central"/>
</dbReference>
<dbReference type="GO" id="GO:0048741">
    <property type="term" value="P:skeletal muscle fiber development"/>
    <property type="evidence" value="ECO:0000266"/>
    <property type="project" value="RGD"/>
</dbReference>
<dbReference type="GO" id="GO:0007519">
    <property type="term" value="P:skeletal muscle tissue development"/>
    <property type="evidence" value="ECO:0000266"/>
    <property type="project" value="RGD"/>
</dbReference>
<dbReference type="GO" id="GO:0043403">
    <property type="term" value="P:skeletal muscle tissue regeneration"/>
    <property type="evidence" value="ECO:0000270"/>
    <property type="project" value="RGD"/>
</dbReference>
<dbReference type="GO" id="GO:0014891">
    <property type="term" value="P:striated muscle atrophy"/>
    <property type="evidence" value="ECO:0000250"/>
    <property type="project" value="UniProtKB"/>
</dbReference>
<dbReference type="CDD" id="cd18935">
    <property type="entry name" value="bHLH_TS_MYOG_Myf4"/>
    <property type="match status" value="1"/>
</dbReference>
<dbReference type="FunFam" id="4.10.280.10:FF:000005">
    <property type="entry name" value="Myogenic factor"/>
    <property type="match status" value="1"/>
</dbReference>
<dbReference type="Gene3D" id="4.10.280.10">
    <property type="entry name" value="Helix-loop-helix DNA-binding domain"/>
    <property type="match status" value="1"/>
</dbReference>
<dbReference type="InterPro" id="IPR011598">
    <property type="entry name" value="bHLH_dom"/>
</dbReference>
<dbReference type="InterPro" id="IPR036638">
    <property type="entry name" value="HLH_DNA-bd_sf"/>
</dbReference>
<dbReference type="InterPro" id="IPR002546">
    <property type="entry name" value="MyoD_N"/>
</dbReference>
<dbReference type="InterPro" id="IPR039704">
    <property type="entry name" value="Myogenic_factor"/>
</dbReference>
<dbReference type="PANTHER" id="PTHR11534">
    <property type="entry name" value="MYOGENIC FACTOR"/>
    <property type="match status" value="1"/>
</dbReference>
<dbReference type="PANTHER" id="PTHR11534:SF5">
    <property type="entry name" value="MYOGENIN"/>
    <property type="match status" value="1"/>
</dbReference>
<dbReference type="Pfam" id="PF01586">
    <property type="entry name" value="Basic"/>
    <property type="match status" value="1"/>
</dbReference>
<dbReference type="Pfam" id="PF00010">
    <property type="entry name" value="HLH"/>
    <property type="match status" value="1"/>
</dbReference>
<dbReference type="SMART" id="SM00520">
    <property type="entry name" value="BASIC"/>
    <property type="match status" value="1"/>
</dbReference>
<dbReference type="SMART" id="SM00353">
    <property type="entry name" value="HLH"/>
    <property type="match status" value="1"/>
</dbReference>
<dbReference type="SUPFAM" id="SSF47459">
    <property type="entry name" value="HLH, helix-loop-helix DNA-binding domain"/>
    <property type="match status" value="1"/>
</dbReference>
<dbReference type="PROSITE" id="PS50888">
    <property type="entry name" value="BHLH"/>
    <property type="match status" value="1"/>
</dbReference>